<sequence>MAHKKAGGSTRNGRDSESKRLGVKRFGGEAVLAGSIIVRQRGTKFHAGINVGCGKDHTLFALADGKVKFEVKGPKNRKFISIEAE</sequence>
<comment type="similarity">
    <text evidence="1">Belongs to the bacterial ribosomal protein bL27 family.</text>
</comment>
<name>RL27_YERPY</name>
<evidence type="ECO:0000255" key="1">
    <source>
        <dbReference type="HAMAP-Rule" id="MF_00539"/>
    </source>
</evidence>
<evidence type="ECO:0000256" key="2">
    <source>
        <dbReference type="SAM" id="MobiDB-lite"/>
    </source>
</evidence>
<evidence type="ECO:0000305" key="3"/>
<gene>
    <name evidence="1" type="primary">rpmA</name>
    <name type="ordered locus">YPK_3756</name>
</gene>
<dbReference type="EMBL" id="CP000950">
    <property type="protein sequence ID" value="ACA70023.1"/>
    <property type="molecule type" value="Genomic_DNA"/>
</dbReference>
<dbReference type="RefSeq" id="WP_002210179.1">
    <property type="nucleotide sequence ID" value="NZ_CP009792.1"/>
</dbReference>
<dbReference type="SMR" id="B1JMJ6"/>
<dbReference type="GeneID" id="97457883"/>
<dbReference type="KEGG" id="ypy:YPK_3756"/>
<dbReference type="PATRIC" id="fig|502800.11.peg.106"/>
<dbReference type="GO" id="GO:0022625">
    <property type="term" value="C:cytosolic large ribosomal subunit"/>
    <property type="evidence" value="ECO:0007669"/>
    <property type="project" value="TreeGrafter"/>
</dbReference>
<dbReference type="GO" id="GO:0003735">
    <property type="term" value="F:structural constituent of ribosome"/>
    <property type="evidence" value="ECO:0007669"/>
    <property type="project" value="InterPro"/>
</dbReference>
<dbReference type="GO" id="GO:0006412">
    <property type="term" value="P:translation"/>
    <property type="evidence" value="ECO:0007669"/>
    <property type="project" value="UniProtKB-UniRule"/>
</dbReference>
<dbReference type="FunFam" id="2.40.50.100:FF:000001">
    <property type="entry name" value="50S ribosomal protein L27"/>
    <property type="match status" value="1"/>
</dbReference>
<dbReference type="Gene3D" id="2.40.50.100">
    <property type="match status" value="1"/>
</dbReference>
<dbReference type="HAMAP" id="MF_00539">
    <property type="entry name" value="Ribosomal_bL27"/>
    <property type="match status" value="1"/>
</dbReference>
<dbReference type="InterPro" id="IPR001684">
    <property type="entry name" value="Ribosomal_bL27"/>
</dbReference>
<dbReference type="InterPro" id="IPR018261">
    <property type="entry name" value="Ribosomal_bL27_CS"/>
</dbReference>
<dbReference type="NCBIfam" id="TIGR00062">
    <property type="entry name" value="L27"/>
    <property type="match status" value="1"/>
</dbReference>
<dbReference type="PANTHER" id="PTHR15893:SF0">
    <property type="entry name" value="LARGE RIBOSOMAL SUBUNIT PROTEIN BL27M"/>
    <property type="match status" value="1"/>
</dbReference>
<dbReference type="PANTHER" id="PTHR15893">
    <property type="entry name" value="RIBOSOMAL PROTEIN L27"/>
    <property type="match status" value="1"/>
</dbReference>
<dbReference type="Pfam" id="PF01016">
    <property type="entry name" value="Ribosomal_L27"/>
    <property type="match status" value="1"/>
</dbReference>
<dbReference type="PRINTS" id="PR00063">
    <property type="entry name" value="RIBOSOMALL27"/>
</dbReference>
<dbReference type="SUPFAM" id="SSF110324">
    <property type="entry name" value="Ribosomal L27 protein-like"/>
    <property type="match status" value="1"/>
</dbReference>
<dbReference type="PROSITE" id="PS00831">
    <property type="entry name" value="RIBOSOMAL_L27"/>
    <property type="match status" value="1"/>
</dbReference>
<proteinExistence type="inferred from homology"/>
<reference key="1">
    <citation type="submission" date="2008-02" db="EMBL/GenBank/DDBJ databases">
        <title>Complete sequence of Yersinia pseudotuberculosis YPIII.</title>
        <authorList>
            <consortium name="US DOE Joint Genome Institute"/>
            <person name="Copeland A."/>
            <person name="Lucas S."/>
            <person name="Lapidus A."/>
            <person name="Glavina del Rio T."/>
            <person name="Dalin E."/>
            <person name="Tice H."/>
            <person name="Bruce D."/>
            <person name="Goodwin L."/>
            <person name="Pitluck S."/>
            <person name="Munk A.C."/>
            <person name="Brettin T."/>
            <person name="Detter J.C."/>
            <person name="Han C."/>
            <person name="Tapia R."/>
            <person name="Schmutz J."/>
            <person name="Larimer F."/>
            <person name="Land M."/>
            <person name="Hauser L."/>
            <person name="Challacombe J.F."/>
            <person name="Green L."/>
            <person name="Lindler L.E."/>
            <person name="Nikolich M.P."/>
            <person name="Richardson P."/>
        </authorList>
    </citation>
    <scope>NUCLEOTIDE SEQUENCE [LARGE SCALE GENOMIC DNA]</scope>
    <source>
        <strain>YPIII</strain>
    </source>
</reference>
<organism>
    <name type="scientific">Yersinia pseudotuberculosis serotype O:3 (strain YPIII)</name>
    <dbReference type="NCBI Taxonomy" id="502800"/>
    <lineage>
        <taxon>Bacteria</taxon>
        <taxon>Pseudomonadati</taxon>
        <taxon>Pseudomonadota</taxon>
        <taxon>Gammaproteobacteria</taxon>
        <taxon>Enterobacterales</taxon>
        <taxon>Yersiniaceae</taxon>
        <taxon>Yersinia</taxon>
    </lineage>
</organism>
<accession>B1JMJ6</accession>
<feature type="chain" id="PRO_1000128833" description="Large ribosomal subunit protein bL27">
    <location>
        <begin position="1"/>
        <end position="85"/>
    </location>
</feature>
<feature type="region of interest" description="Disordered" evidence="2">
    <location>
        <begin position="1"/>
        <end position="20"/>
    </location>
</feature>
<protein>
    <recommendedName>
        <fullName evidence="1">Large ribosomal subunit protein bL27</fullName>
    </recommendedName>
    <alternativeName>
        <fullName evidence="3">50S ribosomal protein L27</fullName>
    </alternativeName>
</protein>
<keyword id="KW-0687">Ribonucleoprotein</keyword>
<keyword id="KW-0689">Ribosomal protein</keyword>